<proteinExistence type="inferred from homology"/>
<accession>Q12X59</accession>
<reference key="1">
    <citation type="journal article" date="2009" name="ISME J.">
        <title>The genome sequence of the psychrophilic archaeon, Methanococcoides burtonii: the role of genome evolution in cold adaptation.</title>
        <authorList>
            <person name="Allen M.A."/>
            <person name="Lauro F.M."/>
            <person name="Williams T.J."/>
            <person name="Burg D."/>
            <person name="Siddiqui K.S."/>
            <person name="De Francisci D."/>
            <person name="Chong K.W."/>
            <person name="Pilak O."/>
            <person name="Chew H.H."/>
            <person name="De Maere M.Z."/>
            <person name="Ting L."/>
            <person name="Katrib M."/>
            <person name="Ng C."/>
            <person name="Sowers K.R."/>
            <person name="Galperin M.Y."/>
            <person name="Anderson I.J."/>
            <person name="Ivanova N."/>
            <person name="Dalin E."/>
            <person name="Martinez M."/>
            <person name="Lapidus A."/>
            <person name="Hauser L."/>
            <person name="Land M."/>
            <person name="Thomas T."/>
            <person name="Cavicchioli R."/>
        </authorList>
    </citation>
    <scope>NUCLEOTIDE SEQUENCE [LARGE SCALE GENOMIC DNA]</scope>
    <source>
        <strain>DSM 6242 / NBRC 107633 / OCM 468 / ACE-M</strain>
    </source>
</reference>
<organism>
    <name type="scientific">Methanococcoides burtonii (strain DSM 6242 / NBRC 107633 / OCM 468 / ACE-M)</name>
    <dbReference type="NCBI Taxonomy" id="259564"/>
    <lineage>
        <taxon>Archaea</taxon>
        <taxon>Methanobacteriati</taxon>
        <taxon>Methanobacteriota</taxon>
        <taxon>Stenosarchaea group</taxon>
        <taxon>Methanomicrobia</taxon>
        <taxon>Methanosarcinales</taxon>
        <taxon>Methanosarcinaceae</taxon>
        <taxon>Methanococcoides</taxon>
    </lineage>
</organism>
<dbReference type="EC" id="1.1.1.261" evidence="1"/>
<dbReference type="EMBL" id="CP000300">
    <property type="protein sequence ID" value="ABE51967.1"/>
    <property type="molecule type" value="Genomic_DNA"/>
</dbReference>
<dbReference type="RefSeq" id="WP_011499116.1">
    <property type="nucleotide sequence ID" value="NC_007955.1"/>
</dbReference>
<dbReference type="SMR" id="Q12X59"/>
<dbReference type="STRING" id="259564.Mbur_1032"/>
<dbReference type="GeneID" id="3998772"/>
<dbReference type="KEGG" id="mbu:Mbur_1032"/>
<dbReference type="HOGENOM" id="CLU_038362_0_0_2"/>
<dbReference type="OrthoDB" id="8656at2157"/>
<dbReference type="UniPathway" id="UPA00940"/>
<dbReference type="Proteomes" id="UP000001979">
    <property type="component" value="Chromosome"/>
</dbReference>
<dbReference type="GO" id="GO:0005737">
    <property type="term" value="C:cytoplasm"/>
    <property type="evidence" value="ECO:0007669"/>
    <property type="project" value="UniProtKB-SubCell"/>
</dbReference>
<dbReference type="GO" id="GO:0106357">
    <property type="term" value="F:glycerol-1-phosphate dehydrogenase (NAD+) activity"/>
    <property type="evidence" value="ECO:0007669"/>
    <property type="project" value="RHEA"/>
</dbReference>
<dbReference type="GO" id="GO:0106358">
    <property type="term" value="F:glycerol-1-phosphate dehydrogenase (NADP+) activity"/>
    <property type="evidence" value="ECO:0007669"/>
    <property type="project" value="RHEA"/>
</dbReference>
<dbReference type="GO" id="GO:0046872">
    <property type="term" value="F:metal ion binding"/>
    <property type="evidence" value="ECO:0007669"/>
    <property type="project" value="UniProtKB-KW"/>
</dbReference>
<dbReference type="GO" id="GO:0006650">
    <property type="term" value="P:glycerophospholipid metabolic process"/>
    <property type="evidence" value="ECO:0007669"/>
    <property type="project" value="UniProtKB-UniRule"/>
</dbReference>
<dbReference type="GO" id="GO:0008654">
    <property type="term" value="P:phospholipid biosynthetic process"/>
    <property type="evidence" value="ECO:0007669"/>
    <property type="project" value="UniProtKB-KW"/>
</dbReference>
<dbReference type="CDD" id="cd08173">
    <property type="entry name" value="Gro1PDH"/>
    <property type="match status" value="1"/>
</dbReference>
<dbReference type="Gene3D" id="3.40.50.1970">
    <property type="match status" value="1"/>
</dbReference>
<dbReference type="Gene3D" id="1.20.1090.10">
    <property type="entry name" value="Dehydroquinate synthase-like - alpha domain"/>
    <property type="match status" value="1"/>
</dbReference>
<dbReference type="HAMAP" id="MF_00497_A">
    <property type="entry name" value="G1P_dehydrogenase_A"/>
    <property type="match status" value="1"/>
</dbReference>
<dbReference type="InterPro" id="IPR023002">
    <property type="entry name" value="G1P_dehydrogenase_arc"/>
</dbReference>
<dbReference type="InterPro" id="IPR032837">
    <property type="entry name" value="G1PDH"/>
</dbReference>
<dbReference type="InterPro" id="IPR016205">
    <property type="entry name" value="Glycerol_DH"/>
</dbReference>
<dbReference type="NCBIfam" id="NF002022">
    <property type="entry name" value="PRK00843.1"/>
    <property type="match status" value="1"/>
</dbReference>
<dbReference type="PANTHER" id="PTHR43616">
    <property type="entry name" value="GLYCEROL DEHYDROGENASE"/>
    <property type="match status" value="1"/>
</dbReference>
<dbReference type="PANTHER" id="PTHR43616:SF5">
    <property type="entry name" value="GLYCEROL DEHYDROGENASE 1"/>
    <property type="match status" value="1"/>
</dbReference>
<dbReference type="Pfam" id="PF13685">
    <property type="entry name" value="Fe-ADH_2"/>
    <property type="match status" value="1"/>
</dbReference>
<dbReference type="PIRSF" id="PIRSF000112">
    <property type="entry name" value="Glycerol_dehydrogenase"/>
    <property type="match status" value="1"/>
</dbReference>
<dbReference type="SUPFAM" id="SSF56796">
    <property type="entry name" value="Dehydroquinate synthase-like"/>
    <property type="match status" value="1"/>
</dbReference>
<gene>
    <name evidence="1" type="primary">egsA</name>
    <name type="ordered locus">Mbur_1032</name>
</gene>
<protein>
    <recommendedName>
        <fullName evidence="1">Glycerol-1-phosphate dehydrogenase [NAD(P)+]</fullName>
        <shortName evidence="1">G1P dehydrogenase</shortName>
        <shortName evidence="1">G1PDH</shortName>
        <ecNumber evidence="1">1.1.1.261</ecNumber>
    </recommendedName>
    <alternativeName>
        <fullName evidence="1">Enantiomeric glycerophosphate synthase</fullName>
    </alternativeName>
    <alternativeName>
        <fullName evidence="1">sn-glycerol-1-phosphate dehydrogenase</fullName>
    </alternativeName>
</protein>
<feature type="chain" id="PRO_0000350650" description="Glycerol-1-phosphate dehydrogenase [NAD(P)+]">
    <location>
        <begin position="1"/>
        <end position="357"/>
    </location>
</feature>
<feature type="binding site" evidence="1">
    <location>
        <begin position="104"/>
        <end position="108"/>
    </location>
    <ligand>
        <name>NAD(+)</name>
        <dbReference type="ChEBI" id="CHEBI:57540"/>
    </ligand>
</feature>
<feature type="binding site" evidence="1">
    <location>
        <begin position="126"/>
        <end position="129"/>
    </location>
    <ligand>
        <name>NAD(+)</name>
        <dbReference type="ChEBI" id="CHEBI:57540"/>
    </ligand>
</feature>
<feature type="binding site" evidence="1">
    <location>
        <position position="131"/>
    </location>
    <ligand>
        <name>substrate</name>
    </ligand>
</feature>
<feature type="binding site" evidence="1">
    <location>
        <position position="135"/>
    </location>
    <ligand>
        <name>NAD(+)</name>
        <dbReference type="ChEBI" id="CHEBI:57540"/>
    </ligand>
</feature>
<feature type="binding site" evidence="1">
    <location>
        <position position="178"/>
    </location>
    <ligand>
        <name>substrate</name>
    </ligand>
</feature>
<feature type="binding site" evidence="1">
    <location>
        <position position="178"/>
    </location>
    <ligand>
        <name>Zn(2+)</name>
        <dbReference type="ChEBI" id="CHEBI:29105"/>
        <note>catalytic</note>
    </ligand>
</feature>
<feature type="binding site" evidence="1">
    <location>
        <position position="258"/>
    </location>
    <ligand>
        <name>Zn(2+)</name>
        <dbReference type="ChEBI" id="CHEBI:29105"/>
        <note>catalytic</note>
    </ligand>
</feature>
<feature type="binding site" evidence="1">
    <location>
        <position position="262"/>
    </location>
    <ligand>
        <name>substrate</name>
    </ligand>
</feature>
<feature type="binding site" evidence="1">
    <location>
        <position position="274"/>
    </location>
    <ligand>
        <name>Zn(2+)</name>
        <dbReference type="ChEBI" id="CHEBI:29105"/>
        <note>catalytic</note>
    </ligand>
</feature>
<comment type="function">
    <text evidence="1">Catalyzes the NAD(P)H-dependent reduction of dihydroxyacetonephosphate (DHAP or glycerone phosphate) to glycerol 1-phosphate (G1P). The G1P thus generated is used as the glycerophosphate backbone of phospholipids in the cellular membranes of Archaea.</text>
</comment>
<comment type="catalytic activity">
    <reaction evidence="1">
        <text>sn-glycerol 1-phosphate + NAD(+) = dihydroxyacetone phosphate + NADH + H(+)</text>
        <dbReference type="Rhea" id="RHEA:21412"/>
        <dbReference type="ChEBI" id="CHEBI:15378"/>
        <dbReference type="ChEBI" id="CHEBI:57540"/>
        <dbReference type="ChEBI" id="CHEBI:57642"/>
        <dbReference type="ChEBI" id="CHEBI:57685"/>
        <dbReference type="ChEBI" id="CHEBI:57945"/>
        <dbReference type="EC" id="1.1.1.261"/>
    </reaction>
</comment>
<comment type="catalytic activity">
    <reaction evidence="1">
        <text>sn-glycerol 1-phosphate + NADP(+) = dihydroxyacetone phosphate + NADPH + H(+)</text>
        <dbReference type="Rhea" id="RHEA:21416"/>
        <dbReference type="ChEBI" id="CHEBI:15378"/>
        <dbReference type="ChEBI" id="CHEBI:57642"/>
        <dbReference type="ChEBI" id="CHEBI:57685"/>
        <dbReference type="ChEBI" id="CHEBI:57783"/>
        <dbReference type="ChEBI" id="CHEBI:58349"/>
        <dbReference type="EC" id="1.1.1.261"/>
    </reaction>
</comment>
<comment type="cofactor">
    <cofactor evidence="1">
        <name>Zn(2+)</name>
        <dbReference type="ChEBI" id="CHEBI:29105"/>
    </cofactor>
    <text evidence="1">Binds 1 zinc ion per subunit.</text>
</comment>
<comment type="pathway">
    <text evidence="1">Membrane lipid metabolism; glycerophospholipid metabolism.</text>
</comment>
<comment type="subcellular location">
    <subcellularLocation>
        <location evidence="1">Cytoplasm</location>
    </subcellularLocation>
</comment>
<comment type="similarity">
    <text evidence="1">Belongs to the glycerol-1-phosphate dehydrogenase family.</text>
</comment>
<keyword id="KW-0963">Cytoplasm</keyword>
<keyword id="KW-0444">Lipid biosynthesis</keyword>
<keyword id="KW-0443">Lipid metabolism</keyword>
<keyword id="KW-0479">Metal-binding</keyword>
<keyword id="KW-0520">NAD</keyword>
<keyword id="KW-0521">NADP</keyword>
<keyword id="KW-0560">Oxidoreductase</keyword>
<keyword id="KW-0594">Phospholipid biosynthesis</keyword>
<keyword id="KW-1208">Phospholipid metabolism</keyword>
<keyword id="KW-0862">Zinc</keyword>
<evidence type="ECO:0000255" key="1">
    <source>
        <dbReference type="HAMAP-Rule" id="MF_00497"/>
    </source>
</evidence>
<sequence length="357" mass="37880">MDVTHDMNGQKKWMQLPRNVVIGNGVINEVRDVCTDLKLIDNALVVTGKSTKGIAGEIVQDSLQDAGQNVELVISESASMKEVERIRKHAIESGTKYFLGVGSGKTIDVAKLAATDLEVPFISVPTAASHDGIVSSRASIKDGKTTTSVQANAPMAVIADTEIIANAPYRLLAAGCGDIISNCTAVLDWQLASRLQNVQFSEYAAALASMTAQILIDSADSIKPELESSVRMVVKALVSSGVAMSIAGSSRPASGSEHMFSHALDRVADEPALHGEQCGVGTILMMYLHGGDWKKISDALKLIGAPTTAKELGIEDKYILEALVLSHTIRPERYTILGTGLTPDAAEIVARKTKVIS</sequence>
<name>G1PDH_METBU</name>